<dbReference type="EC" id="2.7.7.76"/>
<dbReference type="EMBL" id="U28375">
    <property type="protein sequence ID" value="AAA83058.1"/>
    <property type="molecule type" value="Genomic_DNA"/>
</dbReference>
<dbReference type="EMBL" id="U00096">
    <property type="protein sequence ID" value="AAC75915.1"/>
    <property type="molecule type" value="Genomic_DNA"/>
</dbReference>
<dbReference type="EMBL" id="AP009048">
    <property type="protein sequence ID" value="BAE76943.1"/>
    <property type="molecule type" value="Genomic_DNA"/>
</dbReference>
<dbReference type="PIR" id="E65071">
    <property type="entry name" value="E65071"/>
</dbReference>
<dbReference type="RefSeq" id="NP_417353.1">
    <property type="nucleotide sequence ID" value="NC_000913.3"/>
</dbReference>
<dbReference type="RefSeq" id="WP_001272828.1">
    <property type="nucleotide sequence ID" value="NZ_LN832404.1"/>
</dbReference>
<dbReference type="SMR" id="Q46810"/>
<dbReference type="BioGRID" id="4259705">
    <property type="interactions" value="105"/>
</dbReference>
<dbReference type="FunCoup" id="Q46810">
    <property type="interactions" value="55"/>
</dbReference>
<dbReference type="IntAct" id="Q46810">
    <property type="interactions" value="2"/>
</dbReference>
<dbReference type="STRING" id="511145.b2877"/>
<dbReference type="jPOST" id="Q46810"/>
<dbReference type="PaxDb" id="511145-b2877"/>
<dbReference type="EnsemblBacteria" id="AAC75915">
    <property type="protein sequence ID" value="AAC75915"/>
    <property type="gene ID" value="b2877"/>
</dbReference>
<dbReference type="GeneID" id="947356"/>
<dbReference type="KEGG" id="ecj:JW2845"/>
<dbReference type="KEGG" id="eco:b2877"/>
<dbReference type="KEGG" id="ecoc:C3026_15780"/>
<dbReference type="PATRIC" id="fig|1411691.4.peg.3857"/>
<dbReference type="EchoBASE" id="EB2872"/>
<dbReference type="eggNOG" id="COG2068">
    <property type="taxonomic scope" value="Bacteria"/>
</dbReference>
<dbReference type="HOGENOM" id="CLU_061980_1_2_6"/>
<dbReference type="InParanoid" id="Q46810"/>
<dbReference type="OMA" id="KHPPLID"/>
<dbReference type="OrthoDB" id="5298023at2"/>
<dbReference type="PhylomeDB" id="Q46810"/>
<dbReference type="BioCyc" id="EcoCyc:G7496-MONOMER"/>
<dbReference type="BioCyc" id="MetaCyc:G7496-MONOMER"/>
<dbReference type="SABIO-RK" id="Q46810"/>
<dbReference type="PRO" id="PR:Q46810"/>
<dbReference type="Proteomes" id="UP000000625">
    <property type="component" value="Chromosome"/>
</dbReference>
<dbReference type="GO" id="GO:0000287">
    <property type="term" value="F:magnesium ion binding"/>
    <property type="evidence" value="ECO:0000314"/>
    <property type="project" value="EcoCyc"/>
</dbReference>
<dbReference type="GO" id="GO:0061602">
    <property type="term" value="F:molybdenum cofactor cytidylyltransferase activity"/>
    <property type="evidence" value="ECO:0000314"/>
    <property type="project" value="EcoCyc"/>
</dbReference>
<dbReference type="GO" id="GO:0000166">
    <property type="term" value="F:nucleotide binding"/>
    <property type="evidence" value="ECO:0007669"/>
    <property type="project" value="UniProtKB-KW"/>
</dbReference>
<dbReference type="GO" id="GO:1902760">
    <property type="term" value="P:Mo(VI)-molybdopterin cytosine dinucleotide biosynthetic process"/>
    <property type="evidence" value="ECO:0000314"/>
    <property type="project" value="EcoCyc"/>
</dbReference>
<dbReference type="GO" id="GO:0006777">
    <property type="term" value="P:Mo-molybdopterin cofactor biosynthetic process"/>
    <property type="evidence" value="ECO:0000315"/>
    <property type="project" value="EcoCyc"/>
</dbReference>
<dbReference type="CDD" id="cd04182">
    <property type="entry name" value="GT_2_like_f"/>
    <property type="match status" value="1"/>
</dbReference>
<dbReference type="FunFam" id="3.90.550.10:FF:000141">
    <property type="entry name" value="Molybdenum cofactor cytidylyltransferase"/>
    <property type="match status" value="1"/>
</dbReference>
<dbReference type="Gene3D" id="3.90.550.10">
    <property type="entry name" value="Spore Coat Polysaccharide Biosynthesis Protein SpsA, Chain A"/>
    <property type="match status" value="1"/>
</dbReference>
<dbReference type="InterPro" id="IPR017696">
    <property type="entry name" value="Mo_hydrolase_YgfJ"/>
</dbReference>
<dbReference type="InterPro" id="IPR025877">
    <property type="entry name" value="MobA-like_NTP_Trfase"/>
</dbReference>
<dbReference type="InterPro" id="IPR029044">
    <property type="entry name" value="Nucleotide-diphossugar_trans"/>
</dbReference>
<dbReference type="NCBIfam" id="TIGR03310">
    <property type="entry name" value="matur_MocA_YgfJ"/>
    <property type="match status" value="1"/>
</dbReference>
<dbReference type="PANTHER" id="PTHR43777">
    <property type="entry name" value="MOLYBDENUM COFACTOR CYTIDYLYLTRANSFERASE"/>
    <property type="match status" value="1"/>
</dbReference>
<dbReference type="PANTHER" id="PTHR43777:SF1">
    <property type="entry name" value="MOLYBDENUM COFACTOR CYTIDYLYLTRANSFERASE"/>
    <property type="match status" value="1"/>
</dbReference>
<dbReference type="Pfam" id="PF12804">
    <property type="entry name" value="NTP_transf_3"/>
    <property type="match status" value="1"/>
</dbReference>
<dbReference type="SUPFAM" id="SSF53448">
    <property type="entry name" value="Nucleotide-diphospho-sugar transferases"/>
    <property type="match status" value="1"/>
</dbReference>
<feature type="chain" id="PRO_0000169355" description="Molybdenum cofactor cytidylyltransferase">
    <location>
        <begin position="1"/>
        <end position="192"/>
    </location>
</feature>
<feature type="binding site" evidence="1">
    <location>
        <position position="101"/>
    </location>
    <ligand>
        <name>Mg(2+)</name>
        <dbReference type="ChEBI" id="CHEBI:18420"/>
    </ligand>
</feature>
<feature type="mutagenesis site" description="12-fold decrease in affinity for CTP and 3-fold decrease in catalytic activity. Displays a 3-fold decrease in activity with CTP and gains a low activity with GTP as substrate; when associated with 79-P--G-82." evidence="3">
    <original>TAA</original>
    <variation>LAG</variation>
    <location>
        <begin position="9"/>
        <end position="11"/>
    </location>
</feature>
<feature type="mutagenesis site" description="15-fold decrease in affinity for CTP and 1.5-fold decrease in catalytic activity. Displays a 3-fold decrease in activity with CTP and gains a low activity with GTP as substrate; when associated with 9-L--G-11." evidence="3">
    <original>LLTS</original>
    <variation>PLAG</variation>
    <location>
        <begin position="79"/>
        <end position="82"/>
    </location>
</feature>
<evidence type="ECO:0000250" key="1"/>
<evidence type="ECO:0000269" key="2">
    <source>
    </source>
</evidence>
<evidence type="ECO:0000269" key="3">
    <source>
    </source>
</evidence>
<comment type="function">
    <text evidence="2">Transfers a CMP moiety from CTP to Mo-molybdopterin (Mo-MPT) cofactor (Moco or molybdenum cofactor) to form Mo-molybdopterin cytosine dinucleotide (Mo-MCD) cofactor. Is specific for CTP; other nucleotides such as ATP and GTP cannot be utilized. Is also able to convert MPT to MCD in the absence of molybdate, however, with only one catalytic turnover.</text>
</comment>
<comment type="catalytic activity">
    <reaction evidence="2">
        <text>Mo-molybdopterin + CTP + H(+) = Mo-molybdopterin cytosine dinucleotide + diphosphate</text>
        <dbReference type="Rhea" id="RHEA:31335"/>
        <dbReference type="ChEBI" id="CHEBI:15378"/>
        <dbReference type="ChEBI" id="CHEBI:33019"/>
        <dbReference type="ChEBI" id="CHEBI:37563"/>
        <dbReference type="ChEBI" id="CHEBI:71302"/>
        <dbReference type="ChEBI" id="CHEBI:71308"/>
        <dbReference type="EC" id="2.7.7.76"/>
    </reaction>
</comment>
<comment type="cofactor">
    <cofactor evidence="2">
        <name>Mg(2+)</name>
        <dbReference type="ChEBI" id="CHEBI:18420"/>
    </cofactor>
    <cofactor evidence="2">
        <name>Mn(2+)</name>
        <dbReference type="ChEBI" id="CHEBI:29035"/>
    </cofactor>
    <text evidence="2">Mg(2+) is essential for activity. However, Mn(2+) is able to functionally replace Mg(2+) with a 50% reduced efficiency, whereas no MCD is produced with other divalent cations like Co(2+) or Ni(2+).</text>
</comment>
<comment type="biophysicochemical properties">
    <kinetics>
        <KM evidence="2">3.4 uM for CTP</KM>
    </kinetics>
</comment>
<comment type="subunit">
    <text evidence="2 3">Monomer. Interacts with the Moco-binding chaperone PaoD.</text>
</comment>
<comment type="domain">
    <text evidence="3">The N-terminal domain determines nucleotide recognition and specific binding, while the C-terminal domain determines the specific binding to the target protein. When the N-terminal domain of MobA is fused to the C-terminal domain of MocA, comparable kinetic constants as wild-type MobA are obtained with GTP, and the activity with CTP is completely lost. Consistent results are obtained when the N-terminal domain of MocA is fused to the C-terminal domain of MobA: the kinetic constants with CTP are comparable with the ones found for wild-type MocA, although no activity with GTP is detected.</text>
</comment>
<comment type="disruption phenotype">
    <text evidence="2">A disruption in the mocA gene impairs MCD biosynthesis in E.coli, resulting in an inactive PaoABC aldehyde oxidoreductase devoid of MCD cofactor.</text>
</comment>
<keyword id="KW-0460">Magnesium</keyword>
<keyword id="KW-0464">Manganese</keyword>
<keyword id="KW-0479">Metal-binding</keyword>
<keyword id="KW-0501">Molybdenum cofactor biosynthesis</keyword>
<keyword id="KW-0547">Nucleotide-binding</keyword>
<keyword id="KW-1185">Reference proteome</keyword>
<keyword id="KW-0808">Transferase</keyword>
<organism>
    <name type="scientific">Escherichia coli (strain K12)</name>
    <dbReference type="NCBI Taxonomy" id="83333"/>
    <lineage>
        <taxon>Bacteria</taxon>
        <taxon>Pseudomonadati</taxon>
        <taxon>Pseudomonadota</taxon>
        <taxon>Gammaproteobacteria</taxon>
        <taxon>Enterobacterales</taxon>
        <taxon>Enterobacteriaceae</taxon>
        <taxon>Escherichia</taxon>
    </lineage>
</organism>
<proteinExistence type="evidence at protein level"/>
<sequence length="192" mass="21514">MSAIDCIITAAGLSSRMGQWKMMLPWEQGTILDTSIKNALQFCSRIILVTGYRGNELHERYANQSNITIIHNPDYAQGLLTSVKAAVPAVQTEHCFLTHGDMPTLTIDIFRKIWSLRNDGAILPLHNGIPGHPILVSKPCLMQAIQRPNVTNMRQALLMGDHYSVEIENAEIILDIDTPDDFITAKERYTEI</sequence>
<protein>
    <recommendedName>
        <fullName>Molybdenum cofactor cytidylyltransferase</fullName>
        <shortName>MoCo cytidylyltransferase</shortName>
        <ecNumber>2.7.7.76</ecNumber>
    </recommendedName>
    <alternativeName>
        <fullName>CTP:molybdopterin cytidylyltransferase</fullName>
    </alternativeName>
    <alternativeName>
        <fullName>Mo-MPT cytidylyltransferase</fullName>
    </alternativeName>
    <alternativeName>
        <fullName>Molybdopterin cytidylyltransferase</fullName>
    </alternativeName>
    <alternativeName>
        <fullName>Molybdopterin-cytosine dinucleotide synthase</fullName>
        <shortName>MCD synthase</shortName>
    </alternativeName>
</protein>
<gene>
    <name type="primary">mocA</name>
    <name type="synonym">ygfJ</name>
    <name type="ordered locus">b2877</name>
    <name type="ordered locus">JW2845</name>
</gene>
<name>MOCA_ECOLI</name>
<accession>Q46810</accession>
<accession>Q2M9W3</accession>
<reference key="1">
    <citation type="journal article" date="1997" name="Science">
        <title>The complete genome sequence of Escherichia coli K-12.</title>
        <authorList>
            <person name="Blattner F.R."/>
            <person name="Plunkett G. III"/>
            <person name="Bloch C.A."/>
            <person name="Perna N.T."/>
            <person name="Burland V."/>
            <person name="Riley M."/>
            <person name="Collado-Vides J."/>
            <person name="Glasner J.D."/>
            <person name="Rode C.K."/>
            <person name="Mayhew G.F."/>
            <person name="Gregor J."/>
            <person name="Davis N.W."/>
            <person name="Kirkpatrick H.A."/>
            <person name="Goeden M.A."/>
            <person name="Rose D.J."/>
            <person name="Mau B."/>
            <person name="Shao Y."/>
        </authorList>
    </citation>
    <scope>NUCLEOTIDE SEQUENCE [LARGE SCALE GENOMIC DNA]</scope>
    <source>
        <strain>K12 / MG1655 / ATCC 47076</strain>
    </source>
</reference>
<reference key="2">
    <citation type="journal article" date="2006" name="Mol. Syst. Biol.">
        <title>Highly accurate genome sequences of Escherichia coli K-12 strains MG1655 and W3110.</title>
        <authorList>
            <person name="Hayashi K."/>
            <person name="Morooka N."/>
            <person name="Yamamoto Y."/>
            <person name="Fujita K."/>
            <person name="Isono K."/>
            <person name="Choi S."/>
            <person name="Ohtsubo E."/>
            <person name="Baba T."/>
            <person name="Wanner B.L."/>
            <person name="Mori H."/>
            <person name="Horiuchi T."/>
        </authorList>
    </citation>
    <scope>NUCLEOTIDE SEQUENCE [LARGE SCALE GENOMIC DNA]</scope>
    <source>
        <strain>K12 / W3110 / ATCC 27325 / DSM 5911</strain>
    </source>
</reference>
<reference key="3">
    <citation type="journal article" date="2009" name="J. Biol. Chem.">
        <title>MocA is a specific cytidylyltransferase involved in molybdopterin cytosine dinucleotide biosynthesis in Escherichia coli.</title>
        <authorList>
            <person name="Neumann M."/>
            <person name="Mittelstadt G."/>
            <person name="Seduk F."/>
            <person name="Iobbi-Nivol C."/>
            <person name="Leimkuhler S."/>
        </authorList>
    </citation>
    <scope>FUNCTION</scope>
    <scope>CATALYTIC ACTIVITY</scope>
    <scope>COFACTOR</scope>
    <scope>SUBSTRATE SPECIFICITY</scope>
    <scope>KINETIC PARAMETERS</scope>
    <scope>GENE NAME</scope>
    <scope>SUBUNIT</scope>
    <scope>DISRUPTION PHENOTYPE</scope>
</reference>
<reference key="4">
    <citation type="journal article" date="2011" name="J. Biol. Chem.">
        <title>Molybdopterin dinucleotide biosynthesis in Escherichia coli: identification of amino acid residues of molybdopterin dinucleotide transferases that determine specificity for binding of guanine or cytosine nucleotides.</title>
        <authorList>
            <person name="Neumann M."/>
            <person name="Seduk F."/>
            <person name="Iobbi-Nivol C."/>
            <person name="Leimkuhler S."/>
        </authorList>
    </citation>
    <scope>DOMAIN</scope>
    <scope>INTERACTION WITH PAOD</scope>
    <scope>MUTAGENESIS OF 9-THR--ALA-11 AND 79-LEU--SER-82</scope>
</reference>